<comment type="function">
    <text evidence="1">The beta subunit is responsible for the synthesis of L-tryptophan from indole and L-serine.</text>
</comment>
<comment type="catalytic activity">
    <reaction evidence="1">
        <text>(1S,2R)-1-C-(indol-3-yl)glycerol 3-phosphate + L-serine = D-glyceraldehyde 3-phosphate + L-tryptophan + H2O</text>
        <dbReference type="Rhea" id="RHEA:10532"/>
        <dbReference type="ChEBI" id="CHEBI:15377"/>
        <dbReference type="ChEBI" id="CHEBI:33384"/>
        <dbReference type="ChEBI" id="CHEBI:57912"/>
        <dbReference type="ChEBI" id="CHEBI:58866"/>
        <dbReference type="ChEBI" id="CHEBI:59776"/>
        <dbReference type="EC" id="4.2.1.20"/>
    </reaction>
</comment>
<comment type="cofactor">
    <cofactor evidence="1">
        <name>pyridoxal 5'-phosphate</name>
        <dbReference type="ChEBI" id="CHEBI:597326"/>
    </cofactor>
</comment>
<comment type="pathway">
    <text evidence="1">Amino-acid biosynthesis; L-tryptophan biosynthesis; L-tryptophan from chorismate: step 5/5.</text>
</comment>
<comment type="subunit">
    <text evidence="1">Tetramer of two alpha and two beta chains.</text>
</comment>
<comment type="similarity">
    <text evidence="1">Belongs to the TrpB family.</text>
</comment>
<reference key="1">
    <citation type="journal article" date="2004" name="Nature">
        <title>Genome sequence of Silicibacter pomeroyi reveals adaptations to the marine environment.</title>
        <authorList>
            <person name="Moran M.A."/>
            <person name="Buchan A."/>
            <person name="Gonzalez J.M."/>
            <person name="Heidelberg J.F."/>
            <person name="Whitman W.B."/>
            <person name="Kiene R.P."/>
            <person name="Henriksen J.R."/>
            <person name="King G.M."/>
            <person name="Belas R."/>
            <person name="Fuqua C."/>
            <person name="Brinkac L.M."/>
            <person name="Lewis M."/>
            <person name="Johri S."/>
            <person name="Weaver B."/>
            <person name="Pai G."/>
            <person name="Eisen J.A."/>
            <person name="Rahe E."/>
            <person name="Sheldon W.M."/>
            <person name="Ye W."/>
            <person name="Miller T.R."/>
            <person name="Carlton J."/>
            <person name="Rasko D.A."/>
            <person name="Paulsen I.T."/>
            <person name="Ren Q."/>
            <person name="Daugherty S.C."/>
            <person name="DeBoy R.T."/>
            <person name="Dodson R.J."/>
            <person name="Durkin A.S."/>
            <person name="Madupu R."/>
            <person name="Nelson W.C."/>
            <person name="Sullivan S.A."/>
            <person name="Rosovitz M.J."/>
            <person name="Haft D.H."/>
            <person name="Selengut J."/>
            <person name="Ward N."/>
        </authorList>
    </citation>
    <scope>NUCLEOTIDE SEQUENCE [LARGE SCALE GENOMIC DNA]</scope>
    <source>
        <strain>ATCC 700808 / DSM 15171 / DSS-3</strain>
    </source>
</reference>
<reference key="2">
    <citation type="journal article" date="2014" name="Stand. Genomic Sci.">
        <title>An updated genome annotation for the model marine bacterium Ruegeria pomeroyi DSS-3.</title>
        <authorList>
            <person name="Rivers A.R."/>
            <person name="Smith C.B."/>
            <person name="Moran M.A."/>
        </authorList>
    </citation>
    <scope>GENOME REANNOTATION</scope>
    <source>
        <strain>ATCC 700808 / DSM 15171 / DSS-3</strain>
    </source>
</reference>
<dbReference type="EC" id="4.2.1.20" evidence="1"/>
<dbReference type="EMBL" id="CP000031">
    <property type="protein sequence ID" value="AAV94113.1"/>
    <property type="molecule type" value="Genomic_DNA"/>
</dbReference>
<dbReference type="RefSeq" id="WP_011046557.1">
    <property type="nucleotide sequence ID" value="NC_003911.12"/>
</dbReference>
<dbReference type="SMR" id="Q5LV94"/>
<dbReference type="STRING" id="246200.SPO0808"/>
<dbReference type="PaxDb" id="246200-SPO0808"/>
<dbReference type="KEGG" id="sil:SPO0808"/>
<dbReference type="eggNOG" id="COG0133">
    <property type="taxonomic scope" value="Bacteria"/>
</dbReference>
<dbReference type="HOGENOM" id="CLU_016734_3_1_5"/>
<dbReference type="OrthoDB" id="9766131at2"/>
<dbReference type="UniPathway" id="UPA00035">
    <property type="reaction ID" value="UER00044"/>
</dbReference>
<dbReference type="Proteomes" id="UP000001023">
    <property type="component" value="Chromosome"/>
</dbReference>
<dbReference type="GO" id="GO:0005737">
    <property type="term" value="C:cytoplasm"/>
    <property type="evidence" value="ECO:0007669"/>
    <property type="project" value="TreeGrafter"/>
</dbReference>
<dbReference type="GO" id="GO:0004834">
    <property type="term" value="F:tryptophan synthase activity"/>
    <property type="evidence" value="ECO:0007669"/>
    <property type="project" value="UniProtKB-UniRule"/>
</dbReference>
<dbReference type="CDD" id="cd06446">
    <property type="entry name" value="Trp-synth_B"/>
    <property type="match status" value="1"/>
</dbReference>
<dbReference type="FunFam" id="3.40.50.1100:FF:000001">
    <property type="entry name" value="Tryptophan synthase beta chain"/>
    <property type="match status" value="1"/>
</dbReference>
<dbReference type="FunFam" id="3.40.50.1100:FF:000004">
    <property type="entry name" value="Tryptophan synthase beta chain"/>
    <property type="match status" value="1"/>
</dbReference>
<dbReference type="Gene3D" id="3.40.50.1100">
    <property type="match status" value="2"/>
</dbReference>
<dbReference type="HAMAP" id="MF_00133">
    <property type="entry name" value="Trp_synth_beta"/>
    <property type="match status" value="1"/>
</dbReference>
<dbReference type="InterPro" id="IPR006653">
    <property type="entry name" value="Trp_synth_b_CS"/>
</dbReference>
<dbReference type="InterPro" id="IPR006654">
    <property type="entry name" value="Trp_synth_beta"/>
</dbReference>
<dbReference type="InterPro" id="IPR023026">
    <property type="entry name" value="Trp_synth_beta/beta-like"/>
</dbReference>
<dbReference type="InterPro" id="IPR001926">
    <property type="entry name" value="TrpB-like_PALP"/>
</dbReference>
<dbReference type="InterPro" id="IPR036052">
    <property type="entry name" value="TrpB-like_PALP_sf"/>
</dbReference>
<dbReference type="NCBIfam" id="TIGR00263">
    <property type="entry name" value="trpB"/>
    <property type="match status" value="1"/>
</dbReference>
<dbReference type="PANTHER" id="PTHR48077:SF3">
    <property type="entry name" value="TRYPTOPHAN SYNTHASE"/>
    <property type="match status" value="1"/>
</dbReference>
<dbReference type="PANTHER" id="PTHR48077">
    <property type="entry name" value="TRYPTOPHAN SYNTHASE-RELATED"/>
    <property type="match status" value="1"/>
</dbReference>
<dbReference type="Pfam" id="PF00291">
    <property type="entry name" value="PALP"/>
    <property type="match status" value="1"/>
</dbReference>
<dbReference type="PIRSF" id="PIRSF001413">
    <property type="entry name" value="Trp_syn_beta"/>
    <property type="match status" value="1"/>
</dbReference>
<dbReference type="SUPFAM" id="SSF53686">
    <property type="entry name" value="Tryptophan synthase beta subunit-like PLP-dependent enzymes"/>
    <property type="match status" value="1"/>
</dbReference>
<dbReference type="PROSITE" id="PS00168">
    <property type="entry name" value="TRP_SYNTHASE_BETA"/>
    <property type="match status" value="1"/>
</dbReference>
<keyword id="KW-0028">Amino-acid biosynthesis</keyword>
<keyword id="KW-0057">Aromatic amino acid biosynthesis</keyword>
<keyword id="KW-0456">Lyase</keyword>
<keyword id="KW-0663">Pyridoxal phosphate</keyword>
<keyword id="KW-1185">Reference proteome</keyword>
<keyword id="KW-0822">Tryptophan biosynthesis</keyword>
<gene>
    <name evidence="1" type="primary">trpB</name>
    <name type="ordered locus">SPO0808</name>
</gene>
<protein>
    <recommendedName>
        <fullName evidence="1">Tryptophan synthase beta chain</fullName>
        <ecNumber evidence="1">4.2.1.20</ecNumber>
    </recommendedName>
</protein>
<name>TRPB_RUEPO</name>
<organism>
    <name type="scientific">Ruegeria pomeroyi (strain ATCC 700808 / DSM 15171 / DSS-3)</name>
    <name type="common">Silicibacter pomeroyi</name>
    <dbReference type="NCBI Taxonomy" id="246200"/>
    <lineage>
        <taxon>Bacteria</taxon>
        <taxon>Pseudomonadati</taxon>
        <taxon>Pseudomonadota</taxon>
        <taxon>Alphaproteobacteria</taxon>
        <taxon>Rhodobacterales</taxon>
        <taxon>Roseobacteraceae</taxon>
        <taxon>Ruegeria</taxon>
    </lineage>
</organism>
<sequence length="416" mass="45538">MANDLFNSFMSGPDEQGRFGIFGGRFVSETLMPLILSLEEEYEKAKTDPSFWAEMDDLWTNYVGRPSPLYFAERLTEHLGGAKVYMKRDELNHTGAHKINNVLGQIILARRMGKTRIIAETGAGQHGVATATVCAKFGLKCVVYMGAHDVRRQAPNVFRMRLLGAEVIPVTSGRGTLKDAMNDALRDWVTNVRDTFYCIGTVAGPHPYPAMVRDFQSIIGKEAKEQMMKAEGRLPDTIIAAIGGGSNAMGLFYPFLDDTSVNIIGVEAGGKGVNEKMEHCASLTGGRPGVLHGNRTYLLQDDDGQILEGYSISAGLDYPGIGPEHSWLHEVGRAKYVSITDMEALEAFKLCCATEGIIPALEPSHALAHVMKLAPELPKDHIIIMNMCGRGDKDIFTVAKFLGFDMSDTEGRDAED</sequence>
<evidence type="ECO:0000255" key="1">
    <source>
        <dbReference type="HAMAP-Rule" id="MF_00133"/>
    </source>
</evidence>
<proteinExistence type="inferred from homology"/>
<feature type="chain" id="PRO_1000018400" description="Tryptophan synthase beta chain">
    <location>
        <begin position="1"/>
        <end position="416"/>
    </location>
</feature>
<feature type="modified residue" description="N6-(pyridoxal phosphate)lysine" evidence="1">
    <location>
        <position position="98"/>
    </location>
</feature>
<accession>Q5LV94</accession>